<proteinExistence type="inferred from homology"/>
<name>RS10_ACET2</name>
<keyword id="KW-1185">Reference proteome</keyword>
<keyword id="KW-0687">Ribonucleoprotein</keyword>
<keyword id="KW-0689">Ribosomal protein</keyword>
<sequence length="103" mass="11778">MANKQKIRIRLKAFDHQVLDQSAEKIVETAKRTGAKVSGPVPLPTEREVITILRAPHKYKDSREQFEMRTHKRLIDILLPTPKTVDALMRLDLPAGVDIEIKL</sequence>
<dbReference type="EMBL" id="CP000568">
    <property type="protein sequence ID" value="ABN54100.1"/>
    <property type="molecule type" value="Genomic_DNA"/>
</dbReference>
<dbReference type="RefSeq" id="WP_003514618.1">
    <property type="nucleotide sequence ID" value="NC_009012.1"/>
</dbReference>
<dbReference type="SMR" id="A3DJH1"/>
<dbReference type="STRING" id="203119.Cthe_2902"/>
<dbReference type="GeneID" id="35805580"/>
<dbReference type="KEGG" id="cth:Cthe_2902"/>
<dbReference type="eggNOG" id="COG0051">
    <property type="taxonomic scope" value="Bacteria"/>
</dbReference>
<dbReference type="HOGENOM" id="CLU_122625_1_3_9"/>
<dbReference type="OrthoDB" id="9804464at2"/>
<dbReference type="Proteomes" id="UP000002145">
    <property type="component" value="Chromosome"/>
</dbReference>
<dbReference type="GO" id="GO:1990904">
    <property type="term" value="C:ribonucleoprotein complex"/>
    <property type="evidence" value="ECO:0007669"/>
    <property type="project" value="UniProtKB-KW"/>
</dbReference>
<dbReference type="GO" id="GO:0005840">
    <property type="term" value="C:ribosome"/>
    <property type="evidence" value="ECO:0007669"/>
    <property type="project" value="UniProtKB-KW"/>
</dbReference>
<dbReference type="GO" id="GO:0003735">
    <property type="term" value="F:structural constituent of ribosome"/>
    <property type="evidence" value="ECO:0007669"/>
    <property type="project" value="InterPro"/>
</dbReference>
<dbReference type="GO" id="GO:0000049">
    <property type="term" value="F:tRNA binding"/>
    <property type="evidence" value="ECO:0007669"/>
    <property type="project" value="UniProtKB-UniRule"/>
</dbReference>
<dbReference type="GO" id="GO:0006412">
    <property type="term" value="P:translation"/>
    <property type="evidence" value="ECO:0007669"/>
    <property type="project" value="UniProtKB-UniRule"/>
</dbReference>
<dbReference type="FunFam" id="3.30.70.600:FF:000001">
    <property type="entry name" value="30S ribosomal protein S10"/>
    <property type="match status" value="1"/>
</dbReference>
<dbReference type="Gene3D" id="3.30.70.600">
    <property type="entry name" value="Ribosomal protein S10 domain"/>
    <property type="match status" value="1"/>
</dbReference>
<dbReference type="HAMAP" id="MF_00508">
    <property type="entry name" value="Ribosomal_uS10"/>
    <property type="match status" value="1"/>
</dbReference>
<dbReference type="InterPro" id="IPR001848">
    <property type="entry name" value="Ribosomal_uS10"/>
</dbReference>
<dbReference type="InterPro" id="IPR018268">
    <property type="entry name" value="Ribosomal_uS10_CS"/>
</dbReference>
<dbReference type="InterPro" id="IPR027486">
    <property type="entry name" value="Ribosomal_uS10_dom"/>
</dbReference>
<dbReference type="InterPro" id="IPR036838">
    <property type="entry name" value="Ribosomal_uS10_dom_sf"/>
</dbReference>
<dbReference type="NCBIfam" id="NF001861">
    <property type="entry name" value="PRK00596.1"/>
    <property type="match status" value="1"/>
</dbReference>
<dbReference type="NCBIfam" id="TIGR01049">
    <property type="entry name" value="rpsJ_bact"/>
    <property type="match status" value="1"/>
</dbReference>
<dbReference type="PANTHER" id="PTHR11700">
    <property type="entry name" value="30S RIBOSOMAL PROTEIN S10 FAMILY MEMBER"/>
    <property type="match status" value="1"/>
</dbReference>
<dbReference type="Pfam" id="PF00338">
    <property type="entry name" value="Ribosomal_S10"/>
    <property type="match status" value="1"/>
</dbReference>
<dbReference type="PRINTS" id="PR00971">
    <property type="entry name" value="RIBOSOMALS10"/>
</dbReference>
<dbReference type="SMART" id="SM01403">
    <property type="entry name" value="Ribosomal_S10"/>
    <property type="match status" value="1"/>
</dbReference>
<dbReference type="SUPFAM" id="SSF54999">
    <property type="entry name" value="Ribosomal protein S10"/>
    <property type="match status" value="1"/>
</dbReference>
<dbReference type="PROSITE" id="PS00361">
    <property type="entry name" value="RIBOSOMAL_S10"/>
    <property type="match status" value="1"/>
</dbReference>
<protein>
    <recommendedName>
        <fullName evidence="1">Small ribosomal subunit protein uS10</fullName>
    </recommendedName>
    <alternativeName>
        <fullName evidence="2">30S ribosomal protein S10</fullName>
    </alternativeName>
</protein>
<feature type="chain" id="PRO_1000015015" description="Small ribosomal subunit protein uS10">
    <location>
        <begin position="1"/>
        <end position="103"/>
    </location>
</feature>
<evidence type="ECO:0000255" key="1">
    <source>
        <dbReference type="HAMAP-Rule" id="MF_00508"/>
    </source>
</evidence>
<evidence type="ECO:0000305" key="2"/>
<gene>
    <name evidence="1" type="primary">rpsJ</name>
    <name type="ordered locus">Cthe_2902</name>
</gene>
<reference key="1">
    <citation type="submission" date="2007-02" db="EMBL/GenBank/DDBJ databases">
        <title>Complete sequence of Clostridium thermocellum ATCC 27405.</title>
        <authorList>
            <consortium name="US DOE Joint Genome Institute"/>
            <person name="Copeland A."/>
            <person name="Lucas S."/>
            <person name="Lapidus A."/>
            <person name="Barry K."/>
            <person name="Detter J.C."/>
            <person name="Glavina del Rio T."/>
            <person name="Hammon N."/>
            <person name="Israni S."/>
            <person name="Dalin E."/>
            <person name="Tice H."/>
            <person name="Pitluck S."/>
            <person name="Chertkov O."/>
            <person name="Brettin T."/>
            <person name="Bruce D."/>
            <person name="Han C."/>
            <person name="Tapia R."/>
            <person name="Gilna P."/>
            <person name="Schmutz J."/>
            <person name="Larimer F."/>
            <person name="Land M."/>
            <person name="Hauser L."/>
            <person name="Kyrpides N."/>
            <person name="Mikhailova N."/>
            <person name="Wu J.H.D."/>
            <person name="Newcomb M."/>
            <person name="Richardson P."/>
        </authorList>
    </citation>
    <scope>NUCLEOTIDE SEQUENCE [LARGE SCALE GENOMIC DNA]</scope>
    <source>
        <strain>ATCC 27405 / DSM 1237 / JCM 9322 / NBRC 103400 / NCIMB 10682 / NRRL B-4536 / VPI 7372</strain>
    </source>
</reference>
<organism>
    <name type="scientific">Acetivibrio thermocellus (strain ATCC 27405 / DSM 1237 / JCM 9322 / NBRC 103400 / NCIMB 10682 / NRRL B-4536 / VPI 7372)</name>
    <name type="common">Clostridium thermocellum</name>
    <dbReference type="NCBI Taxonomy" id="203119"/>
    <lineage>
        <taxon>Bacteria</taxon>
        <taxon>Bacillati</taxon>
        <taxon>Bacillota</taxon>
        <taxon>Clostridia</taxon>
        <taxon>Eubacteriales</taxon>
        <taxon>Oscillospiraceae</taxon>
        <taxon>Acetivibrio</taxon>
    </lineage>
</organism>
<comment type="function">
    <text evidence="1">Involved in the binding of tRNA to the ribosomes.</text>
</comment>
<comment type="subunit">
    <text evidence="1">Part of the 30S ribosomal subunit.</text>
</comment>
<comment type="similarity">
    <text evidence="1">Belongs to the universal ribosomal protein uS10 family.</text>
</comment>
<accession>A3DJH1</accession>